<keyword id="KW-1185">Reference proteome</keyword>
<sequence length="221" mass="24794">MFPFLKQRSRSVHGEDAPSSTESTVSVAAADIGGACTTLTVWRKSLLVSCEGFTVIDSNGDLIYRVDNYARTRPEELILMDKDGNSLLLMHRTKKITLVDSWGIYEANDTKGETKIPKCPTWYMRKNLKMNILSTKSDILAYVYSGSFDKKNSYIIKGSYRCKSCKIVHVPLNKTVVEIKRKEVRTKGVRFGSDVFDLVVNPGFDTGLAMALVLLLDQMFS</sequence>
<accession>A0MFL4</accession>
<accession>Q9FFS1</accession>
<evidence type="ECO:0000250" key="1"/>
<evidence type="ECO:0000256" key="2">
    <source>
        <dbReference type="SAM" id="MobiDB-lite"/>
    </source>
</evidence>
<evidence type="ECO:0000305" key="3"/>
<comment type="function">
    <text evidence="1">Might be related to the phospholipid scramblase and tubby-like superfamily of membrane tethered transcription factors.</text>
</comment>
<comment type="similarity">
    <text evidence="3">Belongs to the LOR family.</text>
</comment>
<comment type="sequence caution" evidence="3">
    <conflict type="erroneous termination">
        <sequence resource="EMBL-CDS" id="ABK28736"/>
    </conflict>
    <text>Extended C-terminus.</text>
</comment>
<protein>
    <recommendedName>
        <fullName>Protein LURP-one-related 17</fullName>
    </recommendedName>
</protein>
<name>LOR17_ARATH</name>
<gene>
    <name type="ordered locus">At5g41590</name>
    <name type="ORF">MBK23.11</name>
</gene>
<proteinExistence type="evidence at transcript level"/>
<reference key="1">
    <citation type="journal article" date="1997" name="DNA Res.">
        <title>Structural analysis of Arabidopsis thaliana chromosome 5. I. Sequence features of the 1.6 Mb regions covered by twenty physically assigned P1 clones.</title>
        <authorList>
            <person name="Sato S."/>
            <person name="Kotani H."/>
            <person name="Nakamura Y."/>
            <person name="Kaneko T."/>
            <person name="Asamizu E."/>
            <person name="Fukami M."/>
            <person name="Miyajima N."/>
            <person name="Tabata S."/>
        </authorList>
    </citation>
    <scope>NUCLEOTIDE SEQUENCE [LARGE SCALE GENOMIC DNA]</scope>
    <source>
        <strain>cv. Columbia</strain>
    </source>
</reference>
<reference key="2">
    <citation type="journal article" date="2017" name="Plant J.">
        <title>Araport11: a complete reannotation of the Arabidopsis thaliana reference genome.</title>
        <authorList>
            <person name="Cheng C.Y."/>
            <person name="Krishnakumar V."/>
            <person name="Chan A.P."/>
            <person name="Thibaud-Nissen F."/>
            <person name="Schobel S."/>
            <person name="Town C.D."/>
        </authorList>
    </citation>
    <scope>GENOME REANNOTATION</scope>
    <source>
        <strain>cv. Columbia</strain>
    </source>
</reference>
<reference key="3">
    <citation type="journal article" date="2006" name="Plant Biotechnol. J.">
        <title>Simultaneous high-throughput recombinational cloning of open reading frames in closed and open configurations.</title>
        <authorList>
            <person name="Underwood B.A."/>
            <person name="Vanderhaeghen R."/>
            <person name="Whitford R."/>
            <person name="Town C.D."/>
            <person name="Hilson P."/>
        </authorList>
    </citation>
    <scope>NUCLEOTIDE SEQUENCE [LARGE SCALE MRNA]</scope>
    <source>
        <strain>cv. Columbia</strain>
    </source>
</reference>
<feature type="chain" id="PRO_0000399248" description="Protein LURP-one-related 17">
    <location>
        <begin position="1"/>
        <end position="221"/>
    </location>
</feature>
<feature type="region of interest" description="Disordered" evidence="2">
    <location>
        <begin position="1"/>
        <end position="20"/>
    </location>
</feature>
<organism>
    <name type="scientific">Arabidopsis thaliana</name>
    <name type="common">Mouse-ear cress</name>
    <dbReference type="NCBI Taxonomy" id="3702"/>
    <lineage>
        <taxon>Eukaryota</taxon>
        <taxon>Viridiplantae</taxon>
        <taxon>Streptophyta</taxon>
        <taxon>Embryophyta</taxon>
        <taxon>Tracheophyta</taxon>
        <taxon>Spermatophyta</taxon>
        <taxon>Magnoliopsida</taxon>
        <taxon>eudicotyledons</taxon>
        <taxon>Gunneridae</taxon>
        <taxon>Pentapetalae</taxon>
        <taxon>rosids</taxon>
        <taxon>malvids</taxon>
        <taxon>Brassicales</taxon>
        <taxon>Brassicaceae</taxon>
        <taxon>Camelineae</taxon>
        <taxon>Arabidopsis</taxon>
    </lineage>
</organism>
<dbReference type="EMBL" id="AB005233">
    <property type="protein sequence ID" value="BAB11465.1"/>
    <property type="molecule type" value="Genomic_DNA"/>
</dbReference>
<dbReference type="EMBL" id="CP002688">
    <property type="protein sequence ID" value="AED94695.1"/>
    <property type="molecule type" value="Genomic_DNA"/>
</dbReference>
<dbReference type="EMBL" id="DQ447028">
    <property type="protein sequence ID" value="ABE66212.1"/>
    <property type="molecule type" value="mRNA"/>
</dbReference>
<dbReference type="EMBL" id="DQ653340">
    <property type="protein sequence ID" value="ABK28736.1"/>
    <property type="status" value="ALT_SEQ"/>
    <property type="molecule type" value="mRNA"/>
</dbReference>
<dbReference type="RefSeq" id="NP_198974.1">
    <property type="nucleotide sequence ID" value="NM_123523.3"/>
</dbReference>
<dbReference type="SMR" id="A0MFL4"/>
<dbReference type="STRING" id="3702.A0MFL4"/>
<dbReference type="PaxDb" id="3702-AT5G41590.1"/>
<dbReference type="EnsemblPlants" id="AT5G41590.1">
    <property type="protein sequence ID" value="AT5G41590.1"/>
    <property type="gene ID" value="AT5G41590"/>
</dbReference>
<dbReference type="GeneID" id="834161"/>
<dbReference type="Gramene" id="AT5G41590.1">
    <property type="protein sequence ID" value="AT5G41590.1"/>
    <property type="gene ID" value="AT5G41590"/>
</dbReference>
<dbReference type="KEGG" id="ath:AT5G41590"/>
<dbReference type="Araport" id="AT5G41590"/>
<dbReference type="TAIR" id="AT5G41590"/>
<dbReference type="eggNOG" id="ENOG502RYH3">
    <property type="taxonomic scope" value="Eukaryota"/>
</dbReference>
<dbReference type="HOGENOM" id="CLU_063146_3_1_1"/>
<dbReference type="InParanoid" id="A0MFL4"/>
<dbReference type="OMA" id="MSCKGFT"/>
<dbReference type="OrthoDB" id="1876238at2759"/>
<dbReference type="PhylomeDB" id="A0MFL4"/>
<dbReference type="PRO" id="PR:A0MFL4"/>
<dbReference type="Proteomes" id="UP000006548">
    <property type="component" value="Chromosome 5"/>
</dbReference>
<dbReference type="ExpressionAtlas" id="A0MFL4">
    <property type="expression patterns" value="baseline and differential"/>
</dbReference>
<dbReference type="Gene3D" id="2.40.160.200">
    <property type="entry name" value="LURP1-related"/>
    <property type="match status" value="1"/>
</dbReference>
<dbReference type="InterPro" id="IPR007612">
    <property type="entry name" value="LOR"/>
</dbReference>
<dbReference type="InterPro" id="IPR038595">
    <property type="entry name" value="LOR_sf"/>
</dbReference>
<dbReference type="InterPro" id="IPR025659">
    <property type="entry name" value="Tubby-like_C"/>
</dbReference>
<dbReference type="PANTHER" id="PTHR31087">
    <property type="match status" value="1"/>
</dbReference>
<dbReference type="PANTHER" id="PTHR31087:SF14">
    <property type="entry name" value="PROTEIN LURP-ONE-RELATED 17"/>
    <property type="match status" value="1"/>
</dbReference>
<dbReference type="Pfam" id="PF04525">
    <property type="entry name" value="LOR"/>
    <property type="match status" value="1"/>
</dbReference>
<dbReference type="SUPFAM" id="SSF54518">
    <property type="entry name" value="Tubby C-terminal domain-like"/>
    <property type="match status" value="1"/>
</dbReference>